<keyword id="KW-1015">Disulfide bond</keyword>
<keyword id="KW-0325">Glycoprotein</keyword>
<keyword id="KW-0372">Hormone</keyword>
<keyword id="KW-0964">Secreted</keyword>
<keyword id="KW-0732">Signal</keyword>
<reference key="1">
    <citation type="journal article" date="1998" name="Mamm. Genome">
        <title>cDNA cloning of luteinizing hormone subunits from brushtail possum and red kangaroo.</title>
        <authorList>
            <person name="Harrison G.A."/>
            <person name="Deane E.M."/>
            <person name="Cooper D.W."/>
        </authorList>
    </citation>
    <scope>NUCLEOTIDE SEQUENCE [MRNA]</scope>
    <source>
        <tissue>Pituitary</tissue>
    </source>
</reference>
<reference key="2">
    <citation type="journal article" date="1998" name="J. Mol. Endocrinol.">
        <title>The Australian brushtail possum (Trichosurus vulpecula) gonadotrophin alpha-subunit: analysis of cDNA sequence and pattern of expression.</title>
        <authorList>
            <person name="Fidler A.E."/>
            <person name="Lawrence S.B."/>
            <person name="Vanmontfort D.M."/>
            <person name="Tisdall D.J."/>
            <person name="McNatty K.P."/>
        </authorList>
    </citation>
    <scope>NUCLEOTIDE SEQUENCE [MRNA]</scope>
    <scope>TISSUE SPECIFICITY</scope>
    <source>
        <tissue>Pituitary</tissue>
    </source>
</reference>
<dbReference type="EMBL" id="AF017447">
    <property type="protein sequence ID" value="AAC96018.1"/>
    <property type="molecule type" value="mRNA"/>
</dbReference>
<dbReference type="EMBL" id="AF004520">
    <property type="protein sequence ID" value="AAC63900.1"/>
    <property type="molecule type" value="mRNA"/>
</dbReference>
<dbReference type="RefSeq" id="XP_036625033.1">
    <property type="nucleotide sequence ID" value="XM_036769138.1"/>
</dbReference>
<dbReference type="SMR" id="P68268"/>
<dbReference type="GlyCosmos" id="P68268">
    <property type="glycosylation" value="2 sites, No reported glycans"/>
</dbReference>
<dbReference type="GeneID" id="118858572"/>
<dbReference type="OrthoDB" id="9852859at2759"/>
<dbReference type="GO" id="GO:0005615">
    <property type="term" value="C:extracellular space"/>
    <property type="evidence" value="ECO:0000250"/>
    <property type="project" value="UniProtKB"/>
</dbReference>
<dbReference type="GO" id="GO:0016914">
    <property type="term" value="C:follicle-stimulating hormone complex"/>
    <property type="evidence" value="ECO:0000250"/>
    <property type="project" value="UniProtKB"/>
</dbReference>
<dbReference type="GO" id="GO:0016913">
    <property type="term" value="F:follicle-stimulating hormone activity"/>
    <property type="evidence" value="ECO:0000250"/>
    <property type="project" value="UniProtKB"/>
</dbReference>
<dbReference type="GO" id="GO:0007186">
    <property type="term" value="P:G protein-coupled receptor signaling pathway"/>
    <property type="evidence" value="ECO:0000250"/>
    <property type="project" value="UniProtKB"/>
</dbReference>
<dbReference type="GO" id="GO:0010893">
    <property type="term" value="P:positive regulation of steroid biosynthetic process"/>
    <property type="evidence" value="ECO:0000250"/>
    <property type="project" value="UniProtKB"/>
</dbReference>
<dbReference type="GO" id="GO:0010469">
    <property type="term" value="P:regulation of signaling receptor activity"/>
    <property type="evidence" value="ECO:0000250"/>
    <property type="project" value="UniProtKB"/>
</dbReference>
<dbReference type="GO" id="GO:0006590">
    <property type="term" value="P:thyroid hormone generation"/>
    <property type="evidence" value="ECO:0007669"/>
    <property type="project" value="TreeGrafter"/>
</dbReference>
<dbReference type="FunFam" id="2.10.90.10:FF:000011">
    <property type="entry name" value="Glycoprotein hormones alpha chain"/>
    <property type="match status" value="1"/>
</dbReference>
<dbReference type="Gene3D" id="2.10.90.10">
    <property type="entry name" value="Cystine-knot cytokines"/>
    <property type="match status" value="1"/>
</dbReference>
<dbReference type="InterPro" id="IPR029034">
    <property type="entry name" value="Cystine-knot_cytokine"/>
</dbReference>
<dbReference type="InterPro" id="IPR000476">
    <property type="entry name" value="Glyco_hormone"/>
</dbReference>
<dbReference type="PANTHER" id="PTHR11509">
    <property type="entry name" value="GLYCOPROTEIN HORMONE ALPHA CHAIN"/>
    <property type="match status" value="1"/>
</dbReference>
<dbReference type="PANTHER" id="PTHR11509:SF0">
    <property type="entry name" value="GLYCOPROTEIN HORMONES ALPHA CHAIN"/>
    <property type="match status" value="1"/>
</dbReference>
<dbReference type="Pfam" id="PF00236">
    <property type="entry name" value="Hormone_6"/>
    <property type="match status" value="1"/>
</dbReference>
<dbReference type="PRINTS" id="PR00274">
    <property type="entry name" value="GLYCOHORMONE"/>
</dbReference>
<dbReference type="SMART" id="SM00067">
    <property type="entry name" value="GHA"/>
    <property type="match status" value="1"/>
</dbReference>
<dbReference type="SUPFAM" id="SSF57501">
    <property type="entry name" value="Cystine-knot cytokines"/>
    <property type="match status" value="1"/>
</dbReference>
<dbReference type="PROSITE" id="PS00779">
    <property type="entry name" value="GLYCO_HORMONE_ALPHA_1"/>
    <property type="match status" value="1"/>
</dbReference>
<dbReference type="PROSITE" id="PS00780">
    <property type="entry name" value="GLYCO_HORMONE_ALPHA_2"/>
    <property type="match status" value="1"/>
</dbReference>
<dbReference type="PROSITE" id="PS50277">
    <property type="entry name" value="GLYCO_HORMONE_ALPHA_3"/>
    <property type="match status" value="1"/>
</dbReference>
<protein>
    <recommendedName>
        <fullName>Glycoprotein hormones alpha chain</fullName>
    </recommendedName>
    <alternativeName>
        <fullName>Anterior pituitary glycoprotein hormones common subunit alpha</fullName>
    </alternativeName>
    <alternativeName>
        <fullName>Follicle-stimulating hormone alpha chain</fullName>
        <shortName>FSH-alpha</shortName>
    </alternativeName>
    <alternativeName>
        <fullName>Follitropin alpha chain</fullName>
    </alternativeName>
    <alternativeName>
        <fullName>Luteinizing hormone alpha chain</fullName>
        <shortName>LSH-alpha</shortName>
    </alternativeName>
    <alternativeName>
        <fullName>Lutropin alpha chain</fullName>
    </alternativeName>
    <alternativeName>
        <fullName>Thyroid-stimulating hormone alpha chain</fullName>
        <shortName>TSH-alpha</shortName>
    </alternativeName>
    <alternativeName>
        <fullName>Thyrotropin alpha chain</fullName>
    </alternativeName>
</protein>
<comment type="function">
    <text evidence="2">Shared alpha chain of the active heterodimeric glycoprotein hormones thyrotropin/thyroid stimulating hormone/TSH, lutropin/luteinizing hormone/LH and follitropin/follicle stimulating hormone/FSH. These hormones bind specific receptors on target cells that in turn activate downstream signaling pathways.</text>
</comment>
<comment type="subunit">
    <text evidence="2">Heterodimer. The active hormones thyrotropin, lutropin and follitropin are heterodimers composed of CGA, a common alpha chain described here and a unique beta chain which confers their biological specificity to the hormones: TSHB for thyrotropin, LHB for lutropin and FSHB for follitropin.</text>
</comment>
<comment type="subcellular location">
    <subcellularLocation>
        <location evidence="2">Secreted</location>
    </subcellularLocation>
</comment>
<comment type="tissue specificity">
    <text evidence="3">Detected in pituitary.</text>
</comment>
<comment type="similarity">
    <text evidence="4">Belongs to the glycoprotein hormones subunit alpha family.</text>
</comment>
<feature type="signal peptide" evidence="1">
    <location>
        <begin position="1"/>
        <end position="24"/>
    </location>
</feature>
<feature type="chain" id="PRO_0000011656" description="Glycoprotein hormones alpha chain">
    <location>
        <begin position="25"/>
        <end position="120"/>
    </location>
</feature>
<feature type="glycosylation site" description="N-linked (GlcNAc...) asparagine" evidence="2">
    <location>
        <position position="80"/>
    </location>
</feature>
<feature type="glycosylation site" description="N-linked (GlcNAc...) asparagine" evidence="2">
    <location>
        <position position="106"/>
    </location>
</feature>
<feature type="disulfide bond" evidence="2">
    <location>
        <begin position="35"/>
        <end position="59"/>
    </location>
</feature>
<feature type="disulfide bond" evidence="2">
    <location>
        <begin position="38"/>
        <end position="88"/>
    </location>
</feature>
<feature type="disulfide bond" evidence="2">
    <location>
        <begin position="56"/>
        <end position="110"/>
    </location>
</feature>
<feature type="disulfide bond" evidence="2">
    <location>
        <begin position="60"/>
        <end position="112"/>
    </location>
</feature>
<feature type="disulfide bond" evidence="2">
    <location>
        <begin position="87"/>
        <end position="115"/>
    </location>
</feature>
<feature type="sequence conflict" description="In Ref. 2; AAC63900." evidence="4" ref="2">
    <original>L</original>
    <variation>V</variation>
    <location>
        <position position="49"/>
    </location>
</feature>
<gene>
    <name type="primary">CGA</name>
</gene>
<proteinExistence type="evidence at transcript level"/>
<organism>
    <name type="scientific">Trichosurus vulpecula</name>
    <name type="common">Brush-tailed possum</name>
    <dbReference type="NCBI Taxonomy" id="9337"/>
    <lineage>
        <taxon>Eukaryota</taxon>
        <taxon>Metazoa</taxon>
        <taxon>Chordata</taxon>
        <taxon>Craniata</taxon>
        <taxon>Vertebrata</taxon>
        <taxon>Euteleostomi</taxon>
        <taxon>Mammalia</taxon>
        <taxon>Metatheria</taxon>
        <taxon>Diprotodontia</taxon>
        <taxon>Phalangeridae</taxon>
        <taxon>Trichosurus</taxon>
    </lineage>
</organism>
<evidence type="ECO:0000250" key="1"/>
<evidence type="ECO:0000250" key="2">
    <source>
        <dbReference type="UniProtKB" id="P01215"/>
    </source>
</evidence>
<evidence type="ECO:0000269" key="3">
    <source>
    </source>
</evidence>
<evidence type="ECO:0000305" key="4"/>
<accession>P68268</accession>
<accession>O46687</accession>
<accession>O77752</accession>
<sequence>MDYYRKYAAVILATLSVFLHILHSFPDGEFIMQGCPECKLKENKYFSKLGAPIYQCMGCCFSRAYPTPARSKKTMLVPKNITSEATCCVAKAFTKATVMGNAKVENHTECHCSTCYYHKS</sequence>
<name>GLHA_TRIVU</name>